<comment type="function">
    <text evidence="3">UDP-glucosyltransferase catalyzing in planta synthesis of cyanogenic glucosides. Able to glucosylate acetone cyanohydrin and 2-hydroxy-2-methylbutyronitrile, forming linamarin and lotaustralin. Also accepts, to some extent, a wide range of potential acceptor substrates, including simple alcohols, flavonoids, isoflavonoids and other hydroxynitriles such as p-hydroxymandelonitrile, mandelonitrile, (E)-4-hydroxy-2-methylbut-2-enenitrile and (E)- 2-(hydroxymethyl)but-2-enenitrile.</text>
</comment>
<comment type="catalytic activity">
    <reaction evidence="3">
        <text>2-hydroxy-2-methylpropanenitrile + UDP-alpha-D-glucose = linamarin + UDP + H(+)</text>
        <dbReference type="Rhea" id="RHEA:20009"/>
        <dbReference type="ChEBI" id="CHEBI:15348"/>
        <dbReference type="ChEBI" id="CHEBI:15378"/>
        <dbReference type="ChEBI" id="CHEBI:16441"/>
        <dbReference type="ChEBI" id="CHEBI:58223"/>
        <dbReference type="ChEBI" id="CHEBI:58885"/>
        <dbReference type="EC" id="2.4.1.63"/>
    </reaction>
</comment>
<comment type="tissue specificity">
    <text evidence="3">Expressed in the cortex, xylem and phloem parenchyma, and in specific cells in the endodermis of the petiole of the first unfolded leaf.</text>
</comment>
<comment type="similarity">
    <text evidence="5">Belongs to the UDP-glycosyltransferase family.</text>
</comment>
<feature type="chain" id="PRO_0000440668" description="Linamarin synthase 1">
    <location>
        <begin position="1"/>
        <end position="483"/>
    </location>
</feature>
<feature type="active site" description="Proton acceptor" evidence="1">
    <location>
        <position position="22"/>
    </location>
</feature>
<feature type="active site" description="Charge relay" evidence="1">
    <location>
        <position position="124"/>
    </location>
</feature>
<feature type="binding site" evidence="2">
    <location>
        <position position="22"/>
    </location>
    <ligand>
        <name>an anthocyanidin</name>
        <dbReference type="ChEBI" id="CHEBI:143576"/>
    </ligand>
</feature>
<feature type="binding site" evidence="1">
    <location>
        <position position="146"/>
    </location>
    <ligand>
        <name>UDP-alpha-D-glucose</name>
        <dbReference type="ChEBI" id="CHEBI:58885"/>
    </ligand>
</feature>
<feature type="binding site" evidence="1">
    <location>
        <position position="360"/>
    </location>
    <ligand>
        <name>UDP-alpha-D-glucose</name>
        <dbReference type="ChEBI" id="CHEBI:58885"/>
    </ligand>
</feature>
<feature type="binding site" evidence="1">
    <location>
        <position position="362"/>
    </location>
    <ligand>
        <name>UDP-alpha-D-glucose</name>
        <dbReference type="ChEBI" id="CHEBI:58885"/>
    </ligand>
</feature>
<feature type="binding site" evidence="1">
    <location>
        <position position="377"/>
    </location>
    <ligand>
        <name>UDP-alpha-D-glucose</name>
        <dbReference type="ChEBI" id="CHEBI:58885"/>
    </ligand>
</feature>
<feature type="binding site" evidence="1">
    <location>
        <position position="380"/>
    </location>
    <ligand>
        <name>UDP-alpha-D-glucose</name>
        <dbReference type="ChEBI" id="CHEBI:58885"/>
    </ligand>
</feature>
<feature type="binding site" evidence="1">
    <location>
        <position position="381"/>
    </location>
    <ligand>
        <name>UDP-alpha-D-glucose</name>
        <dbReference type="ChEBI" id="CHEBI:58885"/>
    </ligand>
</feature>
<feature type="binding site" evidence="1">
    <location>
        <position position="382"/>
    </location>
    <ligand>
        <name>UDP-alpha-D-glucose</name>
        <dbReference type="ChEBI" id="CHEBI:58885"/>
    </ligand>
</feature>
<feature type="binding site" evidence="1">
    <location>
        <position position="385"/>
    </location>
    <ligand>
        <name>UDP-alpha-D-glucose</name>
        <dbReference type="ChEBI" id="CHEBI:58885"/>
    </ligand>
</feature>
<feature type="binding site" evidence="2">
    <location>
        <position position="400"/>
    </location>
    <ligand>
        <name>an anthocyanidin</name>
        <dbReference type="ChEBI" id="CHEBI:143576"/>
    </ligand>
</feature>
<feature type="binding site" evidence="1">
    <location>
        <position position="401"/>
    </location>
    <ligand>
        <name>UDP-alpha-D-glucose</name>
        <dbReference type="ChEBI" id="CHEBI:58885"/>
    </ligand>
</feature>
<feature type="binding site" evidence="1">
    <location>
        <position position="402"/>
    </location>
    <ligand>
        <name>UDP-alpha-D-glucose</name>
        <dbReference type="ChEBI" id="CHEBI:58885"/>
    </ligand>
</feature>
<dbReference type="EC" id="2.4.1.63" evidence="3"/>
<dbReference type="EMBL" id="JF727883">
    <property type="protein sequence ID" value="AEO45781.1"/>
    <property type="molecule type" value="mRNA"/>
</dbReference>
<dbReference type="SMR" id="G3FIN8"/>
<dbReference type="KEGG" id="ag:AEO45781"/>
<dbReference type="GO" id="GO:0050057">
    <property type="term" value="F:linamarin synthase activity"/>
    <property type="evidence" value="ECO:0007669"/>
    <property type="project" value="UniProtKB-EC"/>
</dbReference>
<dbReference type="GO" id="GO:0006952">
    <property type="term" value="P:defense response"/>
    <property type="evidence" value="ECO:0007669"/>
    <property type="project" value="UniProtKB-KW"/>
</dbReference>
<dbReference type="CDD" id="cd03784">
    <property type="entry name" value="GT1_Gtf-like"/>
    <property type="match status" value="1"/>
</dbReference>
<dbReference type="FunFam" id="3.40.50.2000:FF:000027">
    <property type="entry name" value="Glycosyltransferase"/>
    <property type="match status" value="1"/>
</dbReference>
<dbReference type="FunFam" id="3.40.50.2000:FF:000055">
    <property type="entry name" value="Glycosyltransferase"/>
    <property type="match status" value="1"/>
</dbReference>
<dbReference type="Gene3D" id="3.40.50.2000">
    <property type="entry name" value="Glycogen Phosphorylase B"/>
    <property type="match status" value="2"/>
</dbReference>
<dbReference type="InterPro" id="IPR002213">
    <property type="entry name" value="UDP_glucos_trans"/>
</dbReference>
<dbReference type="PANTHER" id="PTHR11926">
    <property type="entry name" value="GLUCOSYL/GLUCURONOSYL TRANSFERASES"/>
    <property type="match status" value="1"/>
</dbReference>
<dbReference type="PANTHER" id="PTHR11926:SF1547">
    <property type="entry name" value="GLYCOSYLTRANSFERASE"/>
    <property type="match status" value="1"/>
</dbReference>
<dbReference type="Pfam" id="PF00201">
    <property type="entry name" value="UDPGT"/>
    <property type="match status" value="1"/>
</dbReference>
<dbReference type="SUPFAM" id="SSF53756">
    <property type="entry name" value="UDP-Glycosyltransferase/glycogen phosphorylase"/>
    <property type="match status" value="1"/>
</dbReference>
<reference key="1">
    <citation type="journal article" date="2011" name="Plant J.">
        <title>Characterization and expression profile of two UDP-glucosyltransferases, UGT85K4 and UGT85K5, catalyzing the last step in cyanogenic glucoside biosynthesis in cassava.</title>
        <authorList>
            <person name="Kannangara R."/>
            <person name="Motawia M.S."/>
            <person name="Hansen N.K."/>
            <person name="Paquette S.M."/>
            <person name="Olsen C.E."/>
            <person name="Moller B.L."/>
            <person name="Jorgensen K."/>
        </authorList>
    </citation>
    <scope>NUCLEOTIDE SEQUENCE [MRNA]</scope>
    <scope>FUNCTION</scope>
    <scope>CATALYTIC ACTIVITY</scope>
    <scope>TISSUE SPECIFICITY</scope>
    <scope>SUBSTRATE SPECIFICITY</scope>
</reference>
<proteinExistence type="evidence at protein level"/>
<evidence type="ECO:0000250" key="1">
    <source>
        <dbReference type="UniProtKB" id="A0A0A1HA03"/>
    </source>
</evidence>
<evidence type="ECO:0000250" key="2">
    <source>
        <dbReference type="UniProtKB" id="P51094"/>
    </source>
</evidence>
<evidence type="ECO:0000269" key="3">
    <source>
    </source>
</evidence>
<evidence type="ECO:0000303" key="4">
    <source>
    </source>
</evidence>
<evidence type="ECO:0000305" key="5"/>
<evidence type="ECO:0000312" key="6">
    <source>
        <dbReference type="EMBL" id="AEO45781.1"/>
    </source>
</evidence>
<gene>
    <name evidence="4" type="primary">UGT85K4</name>
</gene>
<keyword id="KW-0328">Glycosyltransferase</keyword>
<keyword id="KW-0611">Plant defense</keyword>
<keyword id="KW-0808">Transferase</keyword>
<accession>G3FIN8</accession>
<sequence>MGSISPQKPPHAILVPYPAQGHVNPLMQLGKLLHARGFYITFVNTEHNHRRLIRSRGQEFIDGLPDFKFEAIPDGLPYTDRDATQHVPSLSDSTRKHCLAPFIDLIAKLKASPDVPPITCIISDGVMAFAIDAARHFGILEIQFWTTSACGFMAYLHHIELVRRGIVPFKDESFLHDGTLDQPVDFIPGMPNMKLRDMPSFIRVTDVNDIMFDFLGSEAHKSLKADAIILNTFDELEQEVLDAIAARYSKNIYTVGPFILLEKGIPEIKSKAFRSSLWKEDLSCLEWLDKREPDSVVYVNYGCVTTITNEQLNEFAWGLANSKHPFLWIVRPDVVMGESAVLPEEFYEEIKDRGLLVSWVPQDRVLQHPAVGVFLSHCGWNSTIECISGGKPMICWPFFAEQQTNCKYACDVWKTGVELSTNLKREELVSIIKEMMETEIGRERRRRAVEWRKKAEEAISVGGVSYNNFDTFIKEVILQQQTQ</sequence>
<protein>
    <recommendedName>
        <fullName evidence="5">Linamarin synthase 1</fullName>
        <ecNumber evidence="3">2.4.1.63</ecNumber>
    </recommendedName>
    <alternativeName>
        <fullName evidence="4">Cyanohydrin UDP-glucosyltransferase UGT85K4</fullName>
    </alternativeName>
</protein>
<name>UGTK4_MANES</name>
<organism evidence="6">
    <name type="scientific">Manihot esculenta</name>
    <name type="common">Cassava</name>
    <name type="synonym">Jatropha manihot</name>
    <dbReference type="NCBI Taxonomy" id="3983"/>
    <lineage>
        <taxon>Eukaryota</taxon>
        <taxon>Viridiplantae</taxon>
        <taxon>Streptophyta</taxon>
        <taxon>Embryophyta</taxon>
        <taxon>Tracheophyta</taxon>
        <taxon>Spermatophyta</taxon>
        <taxon>Magnoliopsida</taxon>
        <taxon>eudicotyledons</taxon>
        <taxon>Gunneridae</taxon>
        <taxon>Pentapetalae</taxon>
        <taxon>rosids</taxon>
        <taxon>fabids</taxon>
        <taxon>Malpighiales</taxon>
        <taxon>Euphorbiaceae</taxon>
        <taxon>Crotonoideae</taxon>
        <taxon>Manihoteae</taxon>
        <taxon>Manihot</taxon>
    </lineage>
</organism>